<reference key="1">
    <citation type="journal article" date="2010" name="PLoS ONE">
        <title>The complete multipartite genome sequence of Cupriavidus necator JMP134, a versatile pollutant degrader.</title>
        <authorList>
            <person name="Lykidis A."/>
            <person name="Perez-Pantoja D."/>
            <person name="Ledger T."/>
            <person name="Mavromatis K."/>
            <person name="Anderson I.J."/>
            <person name="Ivanova N.N."/>
            <person name="Hooper S.D."/>
            <person name="Lapidus A."/>
            <person name="Lucas S."/>
            <person name="Gonzalez B."/>
            <person name="Kyrpides N.C."/>
        </authorList>
    </citation>
    <scope>NUCLEOTIDE SEQUENCE [LARGE SCALE GENOMIC DNA]</scope>
    <source>
        <strain>JMP134 / LMG 1197</strain>
    </source>
</reference>
<proteinExistence type="inferred from homology"/>
<comment type="subcellular location">
    <subcellularLocation>
        <location evidence="1">Cell inner membrane</location>
        <topology evidence="1">Multi-pass membrane protein</topology>
    </subcellularLocation>
</comment>
<comment type="similarity">
    <text evidence="1">Belongs to the UPF0060 family.</text>
</comment>
<name>Y3679_CUPPJ</name>
<organism>
    <name type="scientific">Cupriavidus pinatubonensis (strain JMP 134 / LMG 1197)</name>
    <name type="common">Cupriavidus necator (strain JMP 134)</name>
    <dbReference type="NCBI Taxonomy" id="264198"/>
    <lineage>
        <taxon>Bacteria</taxon>
        <taxon>Pseudomonadati</taxon>
        <taxon>Pseudomonadota</taxon>
        <taxon>Betaproteobacteria</taxon>
        <taxon>Burkholderiales</taxon>
        <taxon>Burkholderiaceae</taxon>
        <taxon>Cupriavidus</taxon>
    </lineage>
</organism>
<sequence length="105" mass="11279">MNTIALYLLTAVAEILGCYLPYLWLRQGASAWVLLPGALSLALFAWLLSLHPDASGRVYAAYGGVYIGVAVLWLWLVDGVRPSAWDLAGVGVAFGGMAIIVFQPR</sequence>
<keyword id="KW-0997">Cell inner membrane</keyword>
<keyword id="KW-1003">Cell membrane</keyword>
<keyword id="KW-0472">Membrane</keyword>
<keyword id="KW-0812">Transmembrane</keyword>
<keyword id="KW-1133">Transmembrane helix</keyword>
<accession>Q46UZ7</accession>
<gene>
    <name type="ordered locus">Reut_B3679</name>
</gene>
<dbReference type="EMBL" id="CP000091">
    <property type="protein sequence ID" value="AAZ63037.1"/>
    <property type="molecule type" value="Genomic_DNA"/>
</dbReference>
<dbReference type="STRING" id="264198.Reut_B3679"/>
<dbReference type="KEGG" id="reu:Reut_B3679"/>
<dbReference type="eggNOG" id="COG1742">
    <property type="taxonomic scope" value="Bacteria"/>
</dbReference>
<dbReference type="HOGENOM" id="CLU_117653_2_0_4"/>
<dbReference type="OrthoDB" id="123240at2"/>
<dbReference type="GO" id="GO:0005886">
    <property type="term" value="C:plasma membrane"/>
    <property type="evidence" value="ECO:0007669"/>
    <property type="project" value="UniProtKB-SubCell"/>
</dbReference>
<dbReference type="HAMAP" id="MF_00010">
    <property type="entry name" value="UPF0060"/>
    <property type="match status" value="1"/>
</dbReference>
<dbReference type="InterPro" id="IPR003844">
    <property type="entry name" value="UPF0060"/>
</dbReference>
<dbReference type="NCBIfam" id="NF002586">
    <property type="entry name" value="PRK02237.1"/>
    <property type="match status" value="1"/>
</dbReference>
<dbReference type="PANTHER" id="PTHR36116">
    <property type="entry name" value="UPF0060 MEMBRANE PROTEIN YNFA"/>
    <property type="match status" value="1"/>
</dbReference>
<dbReference type="PANTHER" id="PTHR36116:SF1">
    <property type="entry name" value="UPF0060 MEMBRANE PROTEIN YNFA"/>
    <property type="match status" value="1"/>
</dbReference>
<dbReference type="Pfam" id="PF02694">
    <property type="entry name" value="UPF0060"/>
    <property type="match status" value="1"/>
</dbReference>
<dbReference type="SUPFAM" id="SSF103481">
    <property type="entry name" value="Multidrug resistance efflux transporter EmrE"/>
    <property type="match status" value="1"/>
</dbReference>
<feature type="chain" id="PRO_0000282254" description="UPF0060 membrane protein Reut_B3679">
    <location>
        <begin position="1"/>
        <end position="105"/>
    </location>
</feature>
<feature type="transmembrane region" description="Helical" evidence="1">
    <location>
        <begin position="4"/>
        <end position="24"/>
    </location>
</feature>
<feature type="transmembrane region" description="Helical" evidence="1">
    <location>
        <begin position="28"/>
        <end position="48"/>
    </location>
</feature>
<feature type="transmembrane region" description="Helical" evidence="1">
    <location>
        <begin position="60"/>
        <end position="80"/>
    </location>
</feature>
<feature type="transmembrane region" description="Helical" evidence="1">
    <location>
        <begin position="82"/>
        <end position="102"/>
    </location>
</feature>
<evidence type="ECO:0000255" key="1">
    <source>
        <dbReference type="HAMAP-Rule" id="MF_00010"/>
    </source>
</evidence>
<protein>
    <recommendedName>
        <fullName evidence="1">UPF0060 membrane protein Reut_B3679</fullName>
    </recommendedName>
</protein>